<keyword id="KW-0325">Glycoprotein</keyword>
<keyword id="KW-0349">Heme</keyword>
<keyword id="KW-0408">Iron</keyword>
<keyword id="KW-0472">Membrane</keyword>
<keyword id="KW-0479">Metal-binding</keyword>
<keyword id="KW-0503">Monooxygenase</keyword>
<keyword id="KW-0560">Oxidoreductase</keyword>
<keyword id="KW-0812">Transmembrane</keyword>
<keyword id="KW-1133">Transmembrane helix</keyword>
<name>PTMP_PENOH</name>
<proteinExistence type="inferred from homology"/>
<protein>
    <recommendedName>
        <fullName evidence="5">Cytochrome P450 monooxygenase ptmP</fullName>
        <ecNumber evidence="4">1.-.-.-</ecNumber>
    </recommendedName>
    <alternativeName>
        <fullName evidence="5">Penitrem biosynthesis cluster 1 protein P</fullName>
    </alternativeName>
</protein>
<feature type="chain" id="PRO_0000446573" description="Cytochrome P450 monooxygenase ptmP">
    <location>
        <begin position="1"/>
        <end position="446"/>
    </location>
</feature>
<feature type="transmembrane region" description="Helical" evidence="2">
    <location>
        <begin position="19"/>
        <end position="39"/>
    </location>
</feature>
<feature type="binding site" description="axial binding residue" evidence="1">
    <location>
        <position position="385"/>
    </location>
    <ligand>
        <name>heme</name>
        <dbReference type="ChEBI" id="CHEBI:30413"/>
    </ligand>
    <ligandPart>
        <name>Fe</name>
        <dbReference type="ChEBI" id="CHEBI:18248"/>
    </ligandPart>
</feature>
<feature type="glycosylation site" description="N-linked (GlcNAc...) asparagine" evidence="3">
    <location>
        <position position="430"/>
    </location>
</feature>
<dbReference type="EC" id="1.-.-.-" evidence="4"/>
<dbReference type="EMBL" id="LC027936">
    <property type="protein sequence ID" value="BAU61561.1"/>
    <property type="molecule type" value="Genomic_DNA"/>
</dbReference>
<dbReference type="SMR" id="A0A140JWT4"/>
<dbReference type="GlyCosmos" id="A0A140JWT4">
    <property type="glycosylation" value="1 site, No reported glycans"/>
</dbReference>
<dbReference type="GO" id="GO:0016020">
    <property type="term" value="C:membrane"/>
    <property type="evidence" value="ECO:0007669"/>
    <property type="project" value="UniProtKB-SubCell"/>
</dbReference>
<dbReference type="GO" id="GO:0020037">
    <property type="term" value="F:heme binding"/>
    <property type="evidence" value="ECO:0007669"/>
    <property type="project" value="InterPro"/>
</dbReference>
<dbReference type="GO" id="GO:0005506">
    <property type="term" value="F:iron ion binding"/>
    <property type="evidence" value="ECO:0007669"/>
    <property type="project" value="InterPro"/>
</dbReference>
<dbReference type="GO" id="GO:0004497">
    <property type="term" value="F:monooxygenase activity"/>
    <property type="evidence" value="ECO:0007669"/>
    <property type="project" value="UniProtKB-KW"/>
</dbReference>
<dbReference type="GO" id="GO:0016705">
    <property type="term" value="F:oxidoreductase activity, acting on paired donors, with incorporation or reduction of molecular oxygen"/>
    <property type="evidence" value="ECO:0007669"/>
    <property type="project" value="InterPro"/>
</dbReference>
<dbReference type="GO" id="GO:0043386">
    <property type="term" value="P:mycotoxin biosynthetic process"/>
    <property type="evidence" value="ECO:0007669"/>
    <property type="project" value="UniProtKB-ARBA"/>
</dbReference>
<dbReference type="CDD" id="cd11041">
    <property type="entry name" value="CYP503A1-like"/>
    <property type="match status" value="1"/>
</dbReference>
<dbReference type="Gene3D" id="1.10.630.10">
    <property type="entry name" value="Cytochrome P450"/>
    <property type="match status" value="1"/>
</dbReference>
<dbReference type="InterPro" id="IPR001128">
    <property type="entry name" value="Cyt_P450"/>
</dbReference>
<dbReference type="InterPro" id="IPR002403">
    <property type="entry name" value="Cyt_P450_E_grp-IV"/>
</dbReference>
<dbReference type="InterPro" id="IPR036396">
    <property type="entry name" value="Cyt_P450_sf"/>
</dbReference>
<dbReference type="PANTHER" id="PTHR46206">
    <property type="entry name" value="CYTOCHROME P450"/>
    <property type="match status" value="1"/>
</dbReference>
<dbReference type="PANTHER" id="PTHR46206:SF7">
    <property type="entry name" value="P450, PUTATIVE (EUROFUNG)-RELATED"/>
    <property type="match status" value="1"/>
</dbReference>
<dbReference type="Pfam" id="PF00067">
    <property type="entry name" value="p450"/>
    <property type="match status" value="1"/>
</dbReference>
<dbReference type="PRINTS" id="PR00465">
    <property type="entry name" value="EP450IV"/>
</dbReference>
<dbReference type="SUPFAM" id="SSF48264">
    <property type="entry name" value="Cytochrome P450"/>
    <property type="match status" value="1"/>
</dbReference>
<gene>
    <name evidence="5" type="primary">ptmP</name>
</gene>
<sequence>MTVMVSQIESIGQIVRDEVTVIWILMALVLLAYLILPNPTYRTNVKVPTVRYLGGWIPDQVDRLFFNTKATSVIYDGYKQYKKKAYKVLKADGDLVVLSTRKSSSPPPHSYEVFLRLVARVGARVFIGETLCRDEQWLKASIDYTKNIFVTIALLRPVPGFLQPLVGRVLPSSRSLNHQLAYIKNKFLGPLIEQRREMESSGDSKYEKPDDFLQWMMDLAKTEQESHPHNLAQRLLGITSMAVVHTSAMSLTHILYDLLVMPQWLQPLRDEIQEVNPDWHSTTQAHLIGLKGMDSFLKESQRFNPPGELSFHRVVKHDLTLSDGLFLPKGTHICMAAGPISRDADVMSDPDVFDAFRFVKENRPTSGFVSTGVTNMHFGLGRYACPGRFFAAFVMKAILSRFLTNYDFRFGPDQKDRPKNMMIGDKIVPNVSTPIFIRKRTTSQPL</sequence>
<organism>
    <name type="scientific">Penicillium ochrochloron</name>
    <dbReference type="NCBI Taxonomy" id="69780"/>
    <lineage>
        <taxon>Eukaryota</taxon>
        <taxon>Fungi</taxon>
        <taxon>Dikarya</taxon>
        <taxon>Ascomycota</taxon>
        <taxon>Pezizomycotina</taxon>
        <taxon>Eurotiomycetes</taxon>
        <taxon>Eurotiomycetidae</taxon>
        <taxon>Eurotiales</taxon>
        <taxon>Aspergillaceae</taxon>
        <taxon>Penicillium</taxon>
    </lineage>
</organism>
<comment type="function">
    <text evidence="4">Cytochrome P450 monooxygenase; part of the gene cluster that mediates the biosynthesis of the indole diterpenes penitrems (PubMed:25831977). The geranylgeranyl diphosphate (GGPP) synthase ptmG catalyzes the first step in penitrem biosynthesis via conversion of farnesyl pyrophosphate and isopentyl pyrophosphate into geranylgeranyl pyrophosphate (GGPP) (PubMed:25831977). Condensation of indole-3-glycerol phosphate with GGPP by the prenyl transferase ptmC then forms 3-geranylgeranylindole (3-GGI) (PubMed:25831977). Epoxidation by the FAD-dependent monooxygenase ptmM leads to a epoxidized-GGI that is substrate of the terpene cyclase ptmB for cyclization to yield paspaline (PubMed:25831977). Paspaline is subsequently converted to 13-desoxypaxilline by the cytochrome P450 monooxygenase ptmP, the latter being then converted to paxilline by the cytochrome P450 monooxygenase ptmQ (PubMed:25831977). Paxilline is converted to beta-paxitriol via C-10 ketoreduction by the short-chain dehydrogenase ptmH which can be monoprenylated at the C-20 by the indole diterpene prenyltransferase ptmD (PubMed:25831977). A two-step elimination (acetylation and elimination) process performed by the O-acetyltransferase ptmV and ptmI leads to the production of the prenylated form of penijanthine (PubMed:25831977). The FAD-linked oxidoreductase ptmO then converts the prenylated form of penijanthine into PC-M5 which is in turn transformed into PC-M4 by the aromatic dimethylallyltransferase ptmE (PubMed:25831977). Five sequential oxidative transformations performed by the cytochrome P450 monooxygenases ptmK, ptmU, ptmL, ptmN and ptmJ yield the various penitrem compounds. PtmK, ptmU and ptmM are involved in the formation of the key bicyclic ring of penitrem C via the formation of the intermediates secopenitrem D and penitrem D. PtmL catalyzes the epoxidation of penitrem D and C to yield penitrem B and F, respectively. PtmJ catalyzes the last benzylic hydroxylation to convert penitrem B to prenitrem E and penitrem F to penitrem A (PubMed:25831977).</text>
</comment>
<comment type="cofactor">
    <cofactor evidence="1">
        <name>heme</name>
        <dbReference type="ChEBI" id="CHEBI:30413"/>
    </cofactor>
</comment>
<comment type="pathway">
    <text evidence="4">Secondary metabolite biosynthesis.</text>
</comment>
<comment type="subcellular location">
    <subcellularLocation>
        <location evidence="2">Membrane</location>
        <topology evidence="2">Single-pass membrane protein</topology>
    </subcellularLocation>
</comment>
<comment type="similarity">
    <text evidence="6">Belongs to the cytochrome P450 family.</text>
</comment>
<evidence type="ECO:0000250" key="1">
    <source>
        <dbReference type="UniProtKB" id="P04798"/>
    </source>
</evidence>
<evidence type="ECO:0000255" key="2"/>
<evidence type="ECO:0000255" key="3">
    <source>
        <dbReference type="PROSITE-ProRule" id="PRU00498"/>
    </source>
</evidence>
<evidence type="ECO:0000269" key="4">
    <source>
    </source>
</evidence>
<evidence type="ECO:0000303" key="5">
    <source>
    </source>
</evidence>
<evidence type="ECO:0000305" key="6"/>
<reference key="1">
    <citation type="journal article" date="2015" name="Angew. Chem. Int. Ed.">
        <title>Reconstitution of biosynthetic machinery for the synthesis of the highly elaborated indole diterpene penitrem.</title>
        <authorList>
            <person name="Liu C."/>
            <person name="Tagami K."/>
            <person name="Minami A."/>
            <person name="Matsumoto T."/>
            <person name="Frisvad J.C."/>
            <person name="Suzuki H."/>
            <person name="Ishikawa J."/>
            <person name="Gomi K."/>
            <person name="Oikawa H."/>
        </authorList>
    </citation>
    <scope>NUCLEOTIDE SEQUENCE [GENOMIC DNA]</scope>
    <scope>IDENTIFICATION</scope>
    <scope>FUNCTION</scope>
    <scope>PATHWAY</scope>
    <source>
        <strain>ATCC 90288 / AK-40</strain>
    </source>
</reference>
<accession>A0A140JWT4</accession>